<reference key="1">
    <citation type="submission" date="2007-03" db="EMBL/GenBank/DDBJ databases">
        <title>Sequencing analysis of Arabis hirsuta chloroplast DNA.</title>
        <authorList>
            <person name="Hosouchi T."/>
            <person name="Tsuruoka H."/>
            <person name="Kotani H."/>
        </authorList>
    </citation>
    <scope>NUCLEOTIDE SEQUENCE [LARGE SCALE GENOMIC DNA]</scope>
</reference>
<sequence length="274" mass="29925">MAIHLYKTSTPSTRNGAVDSQVKSNPRNNLIYGQHHCGKGRNARGIITVRHRGGGHKRLYRKIDFRRNAKDIYGRIVTIEYDPNRNAYICLIHYGDGEKRYILHPRGAIIGDTIVSGTEVPIKMGNALPLTDMPLGTAIHNIEITLGKGGQLARAAGAVAKLIAKEGKSATLKLPSGEVRLISKNCSATVGQVGNVGVNQKSLGRAGSKCWLGKRPVVRGVVMNPVDHPHGGGEGRAPIGRKKPVTPWGYPALGRRTRKRKKYSETLILRRRSK</sequence>
<dbReference type="EMBL" id="AP009369">
    <property type="protein sequence ID" value="BAF50064.1"/>
    <property type="molecule type" value="Genomic_DNA"/>
</dbReference>
<dbReference type="EMBL" id="AP009369">
    <property type="protein sequence ID" value="BAF50089.1"/>
    <property type="molecule type" value="Genomic_DNA"/>
</dbReference>
<dbReference type="SMR" id="A4QK59"/>
<dbReference type="GO" id="GO:0009507">
    <property type="term" value="C:chloroplast"/>
    <property type="evidence" value="ECO:0007669"/>
    <property type="project" value="UniProtKB-SubCell"/>
</dbReference>
<dbReference type="GO" id="GO:0005762">
    <property type="term" value="C:mitochondrial large ribosomal subunit"/>
    <property type="evidence" value="ECO:0007669"/>
    <property type="project" value="TreeGrafter"/>
</dbReference>
<dbReference type="GO" id="GO:0019843">
    <property type="term" value="F:rRNA binding"/>
    <property type="evidence" value="ECO:0007669"/>
    <property type="project" value="UniProtKB-UniRule"/>
</dbReference>
<dbReference type="GO" id="GO:0003735">
    <property type="term" value="F:structural constituent of ribosome"/>
    <property type="evidence" value="ECO:0007669"/>
    <property type="project" value="InterPro"/>
</dbReference>
<dbReference type="GO" id="GO:0016740">
    <property type="term" value="F:transferase activity"/>
    <property type="evidence" value="ECO:0007669"/>
    <property type="project" value="InterPro"/>
</dbReference>
<dbReference type="GO" id="GO:0032543">
    <property type="term" value="P:mitochondrial translation"/>
    <property type="evidence" value="ECO:0007669"/>
    <property type="project" value="TreeGrafter"/>
</dbReference>
<dbReference type="FunFam" id="4.10.950.10:FF:000001">
    <property type="entry name" value="50S ribosomal protein L2"/>
    <property type="match status" value="1"/>
</dbReference>
<dbReference type="FunFam" id="2.30.30.30:FF:000008">
    <property type="entry name" value="50S ribosomal protein L2, chloroplastic"/>
    <property type="match status" value="1"/>
</dbReference>
<dbReference type="FunFam" id="2.40.50.140:FF:000029">
    <property type="entry name" value="50S ribosomal protein L2, chloroplastic"/>
    <property type="match status" value="1"/>
</dbReference>
<dbReference type="Gene3D" id="2.30.30.30">
    <property type="match status" value="1"/>
</dbReference>
<dbReference type="Gene3D" id="2.40.50.140">
    <property type="entry name" value="Nucleic acid-binding proteins"/>
    <property type="match status" value="1"/>
</dbReference>
<dbReference type="Gene3D" id="4.10.950.10">
    <property type="entry name" value="Ribosomal protein L2, domain 3"/>
    <property type="match status" value="1"/>
</dbReference>
<dbReference type="HAMAP" id="MF_01320_B">
    <property type="entry name" value="Ribosomal_uL2_B"/>
    <property type="match status" value="1"/>
</dbReference>
<dbReference type="InterPro" id="IPR012340">
    <property type="entry name" value="NA-bd_OB-fold"/>
</dbReference>
<dbReference type="InterPro" id="IPR014722">
    <property type="entry name" value="Rib_uL2_dom2"/>
</dbReference>
<dbReference type="InterPro" id="IPR002171">
    <property type="entry name" value="Ribosomal_uL2"/>
</dbReference>
<dbReference type="InterPro" id="IPR005880">
    <property type="entry name" value="Ribosomal_uL2_bac/org-type"/>
</dbReference>
<dbReference type="InterPro" id="IPR022669">
    <property type="entry name" value="Ribosomal_uL2_C"/>
</dbReference>
<dbReference type="InterPro" id="IPR022671">
    <property type="entry name" value="Ribosomal_uL2_CS"/>
</dbReference>
<dbReference type="InterPro" id="IPR014726">
    <property type="entry name" value="Ribosomal_uL2_dom3"/>
</dbReference>
<dbReference type="InterPro" id="IPR022666">
    <property type="entry name" value="Ribosomal_uL2_RNA-bd_dom"/>
</dbReference>
<dbReference type="InterPro" id="IPR008991">
    <property type="entry name" value="Translation_prot_SH3-like_sf"/>
</dbReference>
<dbReference type="NCBIfam" id="TIGR01171">
    <property type="entry name" value="rplB_bact"/>
    <property type="match status" value="1"/>
</dbReference>
<dbReference type="PANTHER" id="PTHR13691:SF5">
    <property type="entry name" value="LARGE RIBOSOMAL SUBUNIT PROTEIN UL2M"/>
    <property type="match status" value="1"/>
</dbReference>
<dbReference type="PANTHER" id="PTHR13691">
    <property type="entry name" value="RIBOSOMAL PROTEIN L2"/>
    <property type="match status" value="1"/>
</dbReference>
<dbReference type="Pfam" id="PF00181">
    <property type="entry name" value="Ribosomal_L2"/>
    <property type="match status" value="1"/>
</dbReference>
<dbReference type="Pfam" id="PF03947">
    <property type="entry name" value="Ribosomal_L2_C"/>
    <property type="match status" value="1"/>
</dbReference>
<dbReference type="PIRSF" id="PIRSF002158">
    <property type="entry name" value="Ribosomal_L2"/>
    <property type="match status" value="1"/>
</dbReference>
<dbReference type="SMART" id="SM01383">
    <property type="entry name" value="Ribosomal_L2"/>
    <property type="match status" value="1"/>
</dbReference>
<dbReference type="SMART" id="SM01382">
    <property type="entry name" value="Ribosomal_L2_C"/>
    <property type="match status" value="1"/>
</dbReference>
<dbReference type="SUPFAM" id="SSF50249">
    <property type="entry name" value="Nucleic acid-binding proteins"/>
    <property type="match status" value="1"/>
</dbReference>
<dbReference type="SUPFAM" id="SSF50104">
    <property type="entry name" value="Translation proteins SH3-like domain"/>
    <property type="match status" value="1"/>
</dbReference>
<dbReference type="PROSITE" id="PS00467">
    <property type="entry name" value="RIBOSOMAL_L2"/>
    <property type="match status" value="1"/>
</dbReference>
<proteinExistence type="inferred from homology"/>
<accession>A4QK59</accession>
<comment type="subunit">
    <text evidence="1">Part of the 50S ribosomal subunit.</text>
</comment>
<comment type="subcellular location">
    <subcellularLocation>
        <location>Plastid</location>
        <location>Chloroplast</location>
    </subcellularLocation>
</comment>
<comment type="similarity">
    <text evidence="4">Belongs to the universal ribosomal protein uL2 family.</text>
</comment>
<protein>
    <recommendedName>
        <fullName evidence="2">Large ribosomal subunit protein uL2cz/uL2cy</fullName>
    </recommendedName>
    <alternativeName>
        <fullName evidence="4">50S ribosomal protein L2, chloroplastic</fullName>
    </alternativeName>
</protein>
<organism>
    <name type="scientific">Arabis hirsuta</name>
    <name type="common">Hairy rock-cress</name>
    <name type="synonym">Turritis hirsuta</name>
    <dbReference type="NCBI Taxonomy" id="78191"/>
    <lineage>
        <taxon>Eukaryota</taxon>
        <taxon>Viridiplantae</taxon>
        <taxon>Streptophyta</taxon>
        <taxon>Embryophyta</taxon>
        <taxon>Tracheophyta</taxon>
        <taxon>Spermatophyta</taxon>
        <taxon>Magnoliopsida</taxon>
        <taxon>eudicotyledons</taxon>
        <taxon>Gunneridae</taxon>
        <taxon>Pentapetalae</taxon>
        <taxon>rosids</taxon>
        <taxon>malvids</taxon>
        <taxon>Brassicales</taxon>
        <taxon>Brassicaceae</taxon>
        <taxon>Arabideae</taxon>
        <taxon>Arabis</taxon>
    </lineage>
</organism>
<keyword id="KW-0150">Chloroplast</keyword>
<keyword id="KW-0934">Plastid</keyword>
<keyword id="KW-0687">Ribonucleoprotein</keyword>
<keyword id="KW-0689">Ribosomal protein</keyword>
<gene>
    <name type="primary">rpl2-A</name>
</gene>
<gene>
    <name type="primary">rpl2-B</name>
</gene>
<geneLocation type="chloroplast"/>
<evidence type="ECO:0000250" key="1"/>
<evidence type="ECO:0000255" key="2">
    <source>
        <dbReference type="HAMAP-Rule" id="MF_01320"/>
    </source>
</evidence>
<evidence type="ECO:0000256" key="3">
    <source>
        <dbReference type="SAM" id="MobiDB-lite"/>
    </source>
</evidence>
<evidence type="ECO:0000305" key="4"/>
<feature type="chain" id="PRO_0000310064" description="Large ribosomal subunit protein uL2cz/uL2cy">
    <location>
        <begin position="1"/>
        <end position="274"/>
    </location>
</feature>
<feature type="region of interest" description="Disordered" evidence="3">
    <location>
        <begin position="1"/>
        <end position="22"/>
    </location>
</feature>
<feature type="region of interest" description="Disordered" evidence="3">
    <location>
        <begin position="225"/>
        <end position="274"/>
    </location>
</feature>
<name>RK2_ARAHI</name>